<organism>
    <name type="scientific">Salmonella dublin (strain CT_02021853)</name>
    <dbReference type="NCBI Taxonomy" id="439851"/>
    <lineage>
        <taxon>Bacteria</taxon>
        <taxon>Pseudomonadati</taxon>
        <taxon>Pseudomonadota</taxon>
        <taxon>Gammaproteobacteria</taxon>
        <taxon>Enterobacterales</taxon>
        <taxon>Enterobacteriaceae</taxon>
        <taxon>Salmonella</taxon>
    </lineage>
</organism>
<reference key="1">
    <citation type="journal article" date="2011" name="J. Bacteriol.">
        <title>Comparative genomics of 28 Salmonella enterica isolates: evidence for CRISPR-mediated adaptive sublineage evolution.</title>
        <authorList>
            <person name="Fricke W.F."/>
            <person name="Mammel M.K."/>
            <person name="McDermott P.F."/>
            <person name="Tartera C."/>
            <person name="White D.G."/>
            <person name="Leclerc J.E."/>
            <person name="Ravel J."/>
            <person name="Cebula T.A."/>
        </authorList>
    </citation>
    <scope>NUCLEOTIDE SEQUENCE [LARGE SCALE GENOMIC DNA]</scope>
    <source>
        <strain>CT_02021853</strain>
    </source>
</reference>
<protein>
    <recommendedName>
        <fullName evidence="1">Protein YebF</fullName>
    </recommendedName>
</protein>
<feature type="signal peptide" evidence="1">
    <location>
        <begin position="1"/>
        <end position="21"/>
    </location>
</feature>
<feature type="chain" id="PRO_1000145837" description="Protein YebF">
    <location>
        <begin position="22"/>
        <end position="117"/>
    </location>
</feature>
<feature type="domain" description="YebF/Cmi" evidence="2">
    <location>
        <begin position="30"/>
        <end position="117"/>
    </location>
</feature>
<feature type="disulfide bond" evidence="2">
    <location>
        <begin position="34"/>
        <end position="107"/>
    </location>
</feature>
<evidence type="ECO:0000255" key="1">
    <source>
        <dbReference type="HAMAP-Rule" id="MF_01435"/>
    </source>
</evidence>
<evidence type="ECO:0000255" key="2">
    <source>
        <dbReference type="PROSITE-ProRule" id="PRU01323"/>
    </source>
</evidence>
<keyword id="KW-1015">Disulfide bond</keyword>
<keyword id="KW-0964">Secreted</keyword>
<keyword id="KW-0732">Signal</keyword>
<sequence>MNKRGALLSLLLLSASVSAFAASTESKSVKFPQCEGLDAAGIAASVKRDYQQNRIVRWADDQKKVGQADPVAWVNVQDVVGQNDKWTVPLTVRGKSADIHYQVIVDCKAGKAEYKPR</sequence>
<gene>
    <name evidence="1" type="primary">yebF</name>
    <name type="ordered locus">SeD_A1368</name>
</gene>
<comment type="subcellular location">
    <subcellularLocation>
        <location evidence="1">Secreted</location>
    </subcellularLocation>
</comment>
<comment type="similarity">
    <text evidence="1">Belongs to the YebF family.</text>
</comment>
<accession>B5FSQ2</accession>
<proteinExistence type="inferred from homology"/>
<dbReference type="EMBL" id="CP001144">
    <property type="protein sequence ID" value="ACH76046.1"/>
    <property type="molecule type" value="Genomic_DNA"/>
</dbReference>
<dbReference type="RefSeq" id="WP_001042123.1">
    <property type="nucleotide sequence ID" value="NC_011205.1"/>
</dbReference>
<dbReference type="SMR" id="B5FSQ2"/>
<dbReference type="KEGG" id="sed:SeD_A1368"/>
<dbReference type="HOGENOM" id="CLU_161319_1_0_6"/>
<dbReference type="Proteomes" id="UP000008322">
    <property type="component" value="Chromosome"/>
</dbReference>
<dbReference type="GO" id="GO:0005576">
    <property type="term" value="C:extracellular region"/>
    <property type="evidence" value="ECO:0007669"/>
    <property type="project" value="UniProtKB-SubCell"/>
</dbReference>
<dbReference type="Gene3D" id="3.10.450.300">
    <property type="entry name" value="YebF/Colicin-M immunity protein"/>
    <property type="match status" value="1"/>
</dbReference>
<dbReference type="HAMAP" id="MF_01435">
    <property type="entry name" value="YebF"/>
    <property type="match status" value="1"/>
</dbReference>
<dbReference type="InterPro" id="IPR020236">
    <property type="entry name" value="Uncharacterised_YebF"/>
</dbReference>
<dbReference type="InterPro" id="IPR038703">
    <property type="entry name" value="YebF/Cmi_sf"/>
</dbReference>
<dbReference type="InterPro" id="IPR025603">
    <property type="entry name" value="YebF/ColM_immunity"/>
</dbReference>
<dbReference type="NCBIfam" id="NF010224">
    <property type="entry name" value="PRK13680.1"/>
    <property type="match status" value="1"/>
</dbReference>
<dbReference type="NCBIfam" id="NF041240">
    <property type="entry name" value="YebF_not_Cmi"/>
    <property type="match status" value="1"/>
</dbReference>
<dbReference type="Pfam" id="PF13995">
    <property type="entry name" value="YebF"/>
    <property type="match status" value="1"/>
</dbReference>
<dbReference type="PROSITE" id="PS51979">
    <property type="entry name" value="YEBF_CMI"/>
    <property type="match status" value="1"/>
</dbReference>
<name>YEBF_SALDC</name>